<name>RT63_BOVIN</name>
<evidence type="ECO:0000269" key="1">
    <source>
    </source>
</evidence>
<evidence type="ECO:0000305" key="2"/>
<comment type="subcellular location">
    <subcellularLocation>
        <location evidence="1">Mitochondrion</location>
    </subcellularLocation>
</comment>
<comment type="miscellaneous">
    <text>Identified only in the intact 55S subunit. It is unknown whether it belongs to the 28S or to the 39S subunit. May localize at the subunit interface and dissociate from the 55S mitoribosome during subunit separation.</text>
</comment>
<comment type="similarity">
    <text evidence="2">Belongs to the mitochondrion-specific ribosomal protein mL63 family.</text>
</comment>
<protein>
    <recommendedName>
        <fullName evidence="2">Large ribosomal subunit protein mL63</fullName>
    </recommendedName>
    <alternativeName>
        <fullName>Mitochondrial ribosomal protein 63</fullName>
    </alternativeName>
    <alternativeName>
        <fullName>Mitochondrial ribosomal protein L57</fullName>
    </alternativeName>
    <alternativeName>
        <fullName>Ribosomal protein 63, mitochondrial</fullName>
    </alternativeName>
    <alternativeName>
        <fullName>bMRP63</fullName>
    </alternativeName>
</protein>
<dbReference type="EMBL" id="BC102996">
    <property type="protein sequence ID" value="AAI02997.1"/>
    <property type="molecule type" value="mRNA"/>
</dbReference>
<dbReference type="RefSeq" id="NP_001029959.1">
    <property type="nucleotide sequence ID" value="NM_001034787.2"/>
</dbReference>
<dbReference type="RefSeq" id="XP_010809105.1">
    <property type="nucleotide sequence ID" value="XM_010810803.4"/>
</dbReference>
<dbReference type="SMR" id="Q3ZC04"/>
<dbReference type="FunCoup" id="Q3ZC04">
    <property type="interactions" value="636"/>
</dbReference>
<dbReference type="STRING" id="9913.ENSBTAP00000004291"/>
<dbReference type="PaxDb" id="9913-ENSBTAP00000004291"/>
<dbReference type="GeneID" id="615666"/>
<dbReference type="KEGG" id="bta:615666"/>
<dbReference type="CTD" id="78988"/>
<dbReference type="VEuPathDB" id="HostDB:ENSBTAG00000003315"/>
<dbReference type="eggNOG" id="ENOG502S44A">
    <property type="taxonomic scope" value="Eukaryota"/>
</dbReference>
<dbReference type="HOGENOM" id="CLU_175792_1_0_1"/>
<dbReference type="InParanoid" id="Q3ZC04"/>
<dbReference type="OMA" id="QEFGHAA"/>
<dbReference type="OrthoDB" id="6019958at2759"/>
<dbReference type="TreeFam" id="TF324466"/>
<dbReference type="Reactome" id="R-BTA-5389840">
    <property type="pathway name" value="Mitochondrial translation elongation"/>
</dbReference>
<dbReference type="Reactome" id="R-BTA-5419276">
    <property type="pathway name" value="Mitochondrial translation termination"/>
</dbReference>
<dbReference type="Proteomes" id="UP000009136">
    <property type="component" value="Chromosome 12"/>
</dbReference>
<dbReference type="Bgee" id="ENSBTAG00000003315">
    <property type="expression patterns" value="Expressed in semen and 109 other cell types or tissues"/>
</dbReference>
<dbReference type="GO" id="GO:0005743">
    <property type="term" value="C:mitochondrial inner membrane"/>
    <property type="evidence" value="ECO:0000304"/>
    <property type="project" value="Reactome"/>
</dbReference>
<dbReference type="GO" id="GO:0005762">
    <property type="term" value="C:mitochondrial large ribosomal subunit"/>
    <property type="evidence" value="ECO:0007669"/>
    <property type="project" value="Ensembl"/>
</dbReference>
<dbReference type="GO" id="GO:0005761">
    <property type="term" value="C:mitochondrial ribosome"/>
    <property type="evidence" value="ECO:0007005"/>
    <property type="project" value="UniProtKB"/>
</dbReference>
<dbReference type="GO" id="GO:0003735">
    <property type="term" value="F:structural constituent of ribosome"/>
    <property type="evidence" value="ECO:0007005"/>
    <property type="project" value="UniProtKB"/>
</dbReference>
<dbReference type="GO" id="GO:0032543">
    <property type="term" value="P:mitochondrial translation"/>
    <property type="evidence" value="ECO:0007005"/>
    <property type="project" value="UniProtKB"/>
</dbReference>
<dbReference type="InterPro" id="IPR016576">
    <property type="entry name" value="Ribosomal_mL63"/>
</dbReference>
<dbReference type="PANTHER" id="PTHR14520:SF4">
    <property type="entry name" value="LARGE RIBOSOMAL SUBUNIT PROTEIN ML63"/>
    <property type="match status" value="1"/>
</dbReference>
<dbReference type="PANTHER" id="PTHR14520">
    <property type="entry name" value="MITOCHONDRIAL RIBOSOMAL PROTEIN 63"/>
    <property type="match status" value="1"/>
</dbReference>
<dbReference type="Pfam" id="PF14978">
    <property type="entry name" value="MRP-63"/>
    <property type="match status" value="1"/>
</dbReference>
<dbReference type="PIRSF" id="PIRSF011124">
    <property type="entry name" value="MRP63"/>
    <property type="match status" value="1"/>
</dbReference>
<feature type="chain" id="PRO_0000253540" description="Large ribosomal subunit protein mL63">
    <location>
        <begin position="1"/>
        <end position="102"/>
    </location>
</feature>
<gene>
    <name type="primary">MRPL57</name>
    <name type="synonym">MRP63</name>
</gene>
<proteinExistence type="evidence at protein level"/>
<accession>Q3ZC04</accession>
<keyword id="KW-0903">Direct protein sequencing</keyword>
<keyword id="KW-0496">Mitochondrion</keyword>
<keyword id="KW-1185">Reference proteome</keyword>
<keyword id="KW-0687">Ribonucleoprotein</keyword>
<keyword id="KW-0689">Ribosomal protein</keyword>
<sequence>MFLTALLCRGRIPGRQWIGKHRRPRTVSALAKQNMIRRLEIEAENHYWLSRPFLTAEQERGHAAARRAAAFEALKAAQAAKFPAHRRLEDQLDHLNVTRKWS</sequence>
<organism>
    <name type="scientific">Bos taurus</name>
    <name type="common">Bovine</name>
    <dbReference type="NCBI Taxonomy" id="9913"/>
    <lineage>
        <taxon>Eukaryota</taxon>
        <taxon>Metazoa</taxon>
        <taxon>Chordata</taxon>
        <taxon>Craniata</taxon>
        <taxon>Vertebrata</taxon>
        <taxon>Euteleostomi</taxon>
        <taxon>Mammalia</taxon>
        <taxon>Eutheria</taxon>
        <taxon>Laurasiatheria</taxon>
        <taxon>Artiodactyla</taxon>
        <taxon>Ruminantia</taxon>
        <taxon>Pecora</taxon>
        <taxon>Bovidae</taxon>
        <taxon>Bovinae</taxon>
        <taxon>Bos</taxon>
    </lineage>
</organism>
<reference key="1">
    <citation type="submission" date="2005-08" db="EMBL/GenBank/DDBJ databases">
        <authorList>
            <consortium name="NIH - Mammalian Gene Collection (MGC) project"/>
        </authorList>
    </citation>
    <scope>NUCLEOTIDE SEQUENCE [LARGE SCALE MRNA]</scope>
    <source>
        <strain>Hereford</strain>
        <tissue>Thymus</tissue>
    </source>
</reference>
<reference key="2">
    <citation type="journal article" date="2001" name="J. Biol. Chem.">
        <title>Proteomic analysis of the mammalian mitochondrial ribosome. Identification of protein components in the 28S small subunit.</title>
        <authorList>
            <person name="Suzuki T."/>
            <person name="Terasaki M."/>
            <person name="Takemoto-Hori C."/>
            <person name="Hanada T."/>
            <person name="Ueda T."/>
            <person name="Wada A."/>
            <person name="Watanabe K."/>
        </authorList>
    </citation>
    <scope>PROTEIN SEQUENCE OF 9-27</scope>
    <scope>SUBCELLULAR LOCATION</scope>
</reference>